<accession>Q63Q30</accession>
<gene>
    <name evidence="1" type="primary">rplO</name>
    <name type="ordered locus">BPSL3194</name>
</gene>
<sequence>MELNNLKPAEGAKHAKRRVGRGIGSGLGKTAGRGHKGQKSRSGGFHKVGFEGGQMPLQRRLPKRGFTSLTKEFVGEVRLGDLEKLPVDEIDLLALKQAGLVGELIKSAKIIATGELKRKIVVKGLGATKGARAAIEAAGGSFAE</sequence>
<name>RL15_BURPS</name>
<organism>
    <name type="scientific">Burkholderia pseudomallei (strain K96243)</name>
    <dbReference type="NCBI Taxonomy" id="272560"/>
    <lineage>
        <taxon>Bacteria</taxon>
        <taxon>Pseudomonadati</taxon>
        <taxon>Pseudomonadota</taxon>
        <taxon>Betaproteobacteria</taxon>
        <taxon>Burkholderiales</taxon>
        <taxon>Burkholderiaceae</taxon>
        <taxon>Burkholderia</taxon>
        <taxon>pseudomallei group</taxon>
    </lineage>
</organism>
<dbReference type="EMBL" id="BX571965">
    <property type="protein sequence ID" value="CAH37205.1"/>
    <property type="molecule type" value="Genomic_DNA"/>
</dbReference>
<dbReference type="RefSeq" id="WP_004197941.1">
    <property type="nucleotide sequence ID" value="NZ_CP009538.1"/>
</dbReference>
<dbReference type="RefSeq" id="YP_109788.1">
    <property type="nucleotide sequence ID" value="NC_006350.1"/>
</dbReference>
<dbReference type="SMR" id="Q63Q30"/>
<dbReference type="STRING" id="272560.BPSL3194"/>
<dbReference type="GeneID" id="92980300"/>
<dbReference type="KEGG" id="bps:BPSL3194"/>
<dbReference type="PATRIC" id="fig|272560.51.peg.2044"/>
<dbReference type="eggNOG" id="COG0200">
    <property type="taxonomic scope" value="Bacteria"/>
</dbReference>
<dbReference type="Proteomes" id="UP000000605">
    <property type="component" value="Chromosome 1"/>
</dbReference>
<dbReference type="GO" id="GO:0022625">
    <property type="term" value="C:cytosolic large ribosomal subunit"/>
    <property type="evidence" value="ECO:0007669"/>
    <property type="project" value="TreeGrafter"/>
</dbReference>
<dbReference type="GO" id="GO:0019843">
    <property type="term" value="F:rRNA binding"/>
    <property type="evidence" value="ECO:0007669"/>
    <property type="project" value="UniProtKB-UniRule"/>
</dbReference>
<dbReference type="GO" id="GO:0003735">
    <property type="term" value="F:structural constituent of ribosome"/>
    <property type="evidence" value="ECO:0007669"/>
    <property type="project" value="InterPro"/>
</dbReference>
<dbReference type="GO" id="GO:0006412">
    <property type="term" value="P:translation"/>
    <property type="evidence" value="ECO:0007669"/>
    <property type="project" value="UniProtKB-UniRule"/>
</dbReference>
<dbReference type="Gene3D" id="3.100.10.10">
    <property type="match status" value="1"/>
</dbReference>
<dbReference type="HAMAP" id="MF_01341">
    <property type="entry name" value="Ribosomal_uL15"/>
    <property type="match status" value="1"/>
</dbReference>
<dbReference type="InterPro" id="IPR030878">
    <property type="entry name" value="Ribosomal_uL15"/>
</dbReference>
<dbReference type="InterPro" id="IPR021131">
    <property type="entry name" value="Ribosomal_uL15/eL18"/>
</dbReference>
<dbReference type="InterPro" id="IPR036227">
    <property type="entry name" value="Ribosomal_uL15/eL18_sf"/>
</dbReference>
<dbReference type="InterPro" id="IPR005749">
    <property type="entry name" value="Ribosomal_uL15_bac-type"/>
</dbReference>
<dbReference type="InterPro" id="IPR001196">
    <property type="entry name" value="Ribosomal_uL15_CS"/>
</dbReference>
<dbReference type="NCBIfam" id="TIGR01071">
    <property type="entry name" value="rplO_bact"/>
    <property type="match status" value="1"/>
</dbReference>
<dbReference type="PANTHER" id="PTHR12934">
    <property type="entry name" value="50S RIBOSOMAL PROTEIN L15"/>
    <property type="match status" value="1"/>
</dbReference>
<dbReference type="PANTHER" id="PTHR12934:SF11">
    <property type="entry name" value="LARGE RIBOSOMAL SUBUNIT PROTEIN UL15M"/>
    <property type="match status" value="1"/>
</dbReference>
<dbReference type="Pfam" id="PF00828">
    <property type="entry name" value="Ribosomal_L27A"/>
    <property type="match status" value="1"/>
</dbReference>
<dbReference type="SUPFAM" id="SSF52080">
    <property type="entry name" value="Ribosomal proteins L15p and L18e"/>
    <property type="match status" value="1"/>
</dbReference>
<dbReference type="PROSITE" id="PS00475">
    <property type="entry name" value="RIBOSOMAL_L15"/>
    <property type="match status" value="1"/>
</dbReference>
<keyword id="KW-1185">Reference proteome</keyword>
<keyword id="KW-0687">Ribonucleoprotein</keyword>
<keyword id="KW-0689">Ribosomal protein</keyword>
<keyword id="KW-0694">RNA-binding</keyword>
<keyword id="KW-0699">rRNA-binding</keyword>
<evidence type="ECO:0000255" key="1">
    <source>
        <dbReference type="HAMAP-Rule" id="MF_01341"/>
    </source>
</evidence>
<evidence type="ECO:0000256" key="2">
    <source>
        <dbReference type="SAM" id="MobiDB-lite"/>
    </source>
</evidence>
<evidence type="ECO:0000305" key="3"/>
<proteinExistence type="inferred from homology"/>
<feature type="chain" id="PRO_0000104698" description="Large ribosomal subunit protein uL15">
    <location>
        <begin position="1"/>
        <end position="144"/>
    </location>
</feature>
<feature type="region of interest" description="Disordered" evidence="2">
    <location>
        <begin position="1"/>
        <end position="56"/>
    </location>
</feature>
<feature type="compositionally biased region" description="Gly residues" evidence="2">
    <location>
        <begin position="21"/>
        <end position="31"/>
    </location>
</feature>
<reference key="1">
    <citation type="journal article" date="2004" name="Proc. Natl. Acad. Sci. U.S.A.">
        <title>Genomic plasticity of the causative agent of melioidosis, Burkholderia pseudomallei.</title>
        <authorList>
            <person name="Holden M.T.G."/>
            <person name="Titball R.W."/>
            <person name="Peacock S.J."/>
            <person name="Cerdeno-Tarraga A.-M."/>
            <person name="Atkins T."/>
            <person name="Crossman L.C."/>
            <person name="Pitt T."/>
            <person name="Churcher C."/>
            <person name="Mungall K.L."/>
            <person name="Bentley S.D."/>
            <person name="Sebaihia M."/>
            <person name="Thomson N.R."/>
            <person name="Bason N."/>
            <person name="Beacham I.R."/>
            <person name="Brooks K."/>
            <person name="Brown K.A."/>
            <person name="Brown N.F."/>
            <person name="Challis G.L."/>
            <person name="Cherevach I."/>
            <person name="Chillingworth T."/>
            <person name="Cronin A."/>
            <person name="Crossett B."/>
            <person name="Davis P."/>
            <person name="DeShazer D."/>
            <person name="Feltwell T."/>
            <person name="Fraser A."/>
            <person name="Hance Z."/>
            <person name="Hauser H."/>
            <person name="Holroyd S."/>
            <person name="Jagels K."/>
            <person name="Keith K.E."/>
            <person name="Maddison M."/>
            <person name="Moule S."/>
            <person name="Price C."/>
            <person name="Quail M.A."/>
            <person name="Rabbinowitsch E."/>
            <person name="Rutherford K."/>
            <person name="Sanders M."/>
            <person name="Simmonds M."/>
            <person name="Songsivilai S."/>
            <person name="Stevens K."/>
            <person name="Tumapa S."/>
            <person name="Vesaratchavest M."/>
            <person name="Whitehead S."/>
            <person name="Yeats C."/>
            <person name="Barrell B.G."/>
            <person name="Oyston P.C.F."/>
            <person name="Parkhill J."/>
        </authorList>
    </citation>
    <scope>NUCLEOTIDE SEQUENCE [LARGE SCALE GENOMIC DNA]</scope>
    <source>
        <strain>K96243</strain>
    </source>
</reference>
<comment type="function">
    <text evidence="1">Binds to the 23S rRNA.</text>
</comment>
<comment type="subunit">
    <text evidence="1">Part of the 50S ribosomal subunit.</text>
</comment>
<comment type="similarity">
    <text evidence="1">Belongs to the universal ribosomal protein uL15 family.</text>
</comment>
<protein>
    <recommendedName>
        <fullName evidence="1">Large ribosomal subunit protein uL15</fullName>
    </recommendedName>
    <alternativeName>
        <fullName evidence="3">50S ribosomal protein L15</fullName>
    </alternativeName>
</protein>